<accession>P0CI84</accession>
<sequence>MKLMWLLFLCVLAFSIAQIYISDPCAGGVHRCYEPCEKKKCRLPHKCINGRCTCYVGRNVCAISSH</sequence>
<proteinExistence type="inferred from homology"/>
<keyword id="KW-1015">Disulfide bond</keyword>
<keyword id="KW-0964">Secreted</keyword>
<keyword id="KW-0732">Signal</keyword>
<organism>
    <name type="scientific">Lychas mucronatus</name>
    <name type="common">Chinese swimming scorpion</name>
    <dbReference type="NCBI Taxonomy" id="172552"/>
    <lineage>
        <taxon>Eukaryota</taxon>
        <taxon>Metazoa</taxon>
        <taxon>Ecdysozoa</taxon>
        <taxon>Arthropoda</taxon>
        <taxon>Chelicerata</taxon>
        <taxon>Arachnida</taxon>
        <taxon>Scorpiones</taxon>
        <taxon>Buthida</taxon>
        <taxon>Buthoidea</taxon>
        <taxon>Buthidae</taxon>
        <taxon>Lychas</taxon>
    </lineage>
</organism>
<evidence type="ECO:0000250" key="1"/>
<evidence type="ECO:0000255" key="2"/>
<evidence type="ECO:0000303" key="3">
    <source>
    </source>
</evidence>
<evidence type="ECO:0000303" key="4">
    <source>
    </source>
</evidence>
<evidence type="ECO:0000305" key="5"/>
<reference key="1">
    <citation type="journal article" date="2010" name="BMC Genomics">
        <title>Comparative venom gland transcriptome analysis of the scorpion Lychas mucronatus reveals intraspecific toxic gene diversity and new venomous components.</title>
        <authorList>
            <person name="Zhao R."/>
            <person name="Ma Y."/>
            <person name="He Y."/>
            <person name="Di Z."/>
            <person name="Wu Y.-L."/>
            <person name="Cao Z.-J."/>
            <person name="Li W.-X."/>
        </authorList>
    </citation>
    <scope>NUCLEOTIDE SEQUENCE [MRNA]</scope>
    <source>
        <strain>Yunnan</strain>
        <tissue>Venom gland</tissue>
    </source>
</reference>
<reference key="2">
    <citation type="journal article" date="2014" name="BMC Genomics">
        <title>The Mediterranean scorpion Mesobuthus gibbosus (Scorpiones, Buthidae): transcriptome analysis and organization of the genome encoding chlorotoxin-like peptides.</title>
        <authorList>
            <person name="Diego-Garcia E."/>
            <person name="Caliskan F."/>
            <person name="Tytgat J."/>
        </authorList>
    </citation>
    <scope>NOMENCLATURE</scope>
</reference>
<protein>
    <recommendedName>
        <fullName evidence="4">Potassium channel toxin alpha-KTx 27.3</fullName>
    </recommendedName>
    <alternativeName>
        <fullName evidence="3">Putative neurotoxin-C</fullName>
    </alternativeName>
</protein>
<name>KA273_LYCMC</name>
<dbReference type="EMBL" id="GT028654">
    <property type="status" value="NOT_ANNOTATED_CDS"/>
    <property type="molecule type" value="mRNA"/>
</dbReference>
<dbReference type="SMR" id="P0CI84"/>
<dbReference type="GO" id="GO:0005576">
    <property type="term" value="C:extracellular region"/>
    <property type="evidence" value="ECO:0007669"/>
    <property type="project" value="UniProtKB-SubCell"/>
</dbReference>
<dbReference type="Gene3D" id="3.30.30.10">
    <property type="entry name" value="Knottin, scorpion toxin-like"/>
    <property type="match status" value="1"/>
</dbReference>
<dbReference type="InterPro" id="IPR036574">
    <property type="entry name" value="Scorpion_toxin-like_sf"/>
</dbReference>
<dbReference type="SUPFAM" id="SSF57095">
    <property type="entry name" value="Scorpion toxin-like"/>
    <property type="match status" value="1"/>
</dbReference>
<comment type="subcellular location">
    <subcellularLocation>
        <location evidence="1">Secreted</location>
    </subcellularLocation>
</comment>
<comment type="tissue specificity">
    <text evidence="5">Expressed by the venom gland.</text>
</comment>
<comment type="domain">
    <text evidence="5">Has the structural arrangement of an alpha-helix connected to antiparallel beta-sheets by disulfide bonds (CS-alpha/beta).</text>
</comment>
<comment type="PTM">
    <text evidence="5">Contains 4 disulfide bonds.</text>
</comment>
<comment type="similarity">
    <text evidence="5">Belongs to the short scorpion toxin superfamily. Potassium channel inhibitor family. Alpha-KTx 27 subfamily.</text>
</comment>
<feature type="signal peptide" evidence="2">
    <location>
        <begin position="1"/>
        <end position="17"/>
    </location>
</feature>
<feature type="chain" id="PRO_0000403835" description="Potassium channel toxin alpha-KTx 27.3">
    <location>
        <begin position="18"/>
        <end position="66"/>
    </location>
</feature>